<keyword id="KW-1003">Cell membrane</keyword>
<keyword id="KW-0903">Direct protein sequencing</keyword>
<keyword id="KW-0418">Kinase</keyword>
<keyword id="KW-0472">Membrane</keyword>
<keyword id="KW-0597">Phosphoprotein</keyword>
<keyword id="KW-0598">Phosphotransferase system</keyword>
<keyword id="KW-0762">Sugar transport</keyword>
<keyword id="KW-0808">Transferase</keyword>
<keyword id="KW-0812">Transmembrane</keyword>
<keyword id="KW-1133">Transmembrane helix</keyword>
<keyword id="KW-0813">Transport</keyword>
<comment type="function">
    <text evidence="5 6 9 12 14">The phosphoenolpyruvate-dependent sugar phosphotransferase system (sugar PTS), a major carbohydrate active transport system, catalyzes the phosphorylation of incoming sugar substrates concomitantly with their translocation across the cell membrane. The enzyme II LacEF PTS system is involved in lactose transport, but can also use galactose, isopropyl beta-thio-galactopyranoside and thiomethyl beta-D-galactopyranoside (TMG) as substrates.</text>
</comment>
<comment type="catalytic activity">
    <reaction evidence="6 9 13">
        <text>lactose(out) + N(pros)-phospho-L-histidyl-[protein] = lactose 6-phosphate(in) + L-histidyl-[protein]</text>
        <dbReference type="Rhea" id="RHEA:42400"/>
        <dbReference type="Rhea" id="RHEA-COMP:9745"/>
        <dbReference type="Rhea" id="RHEA-COMP:9746"/>
        <dbReference type="ChEBI" id="CHEBI:17716"/>
        <dbReference type="ChEBI" id="CHEBI:29979"/>
        <dbReference type="ChEBI" id="CHEBI:64837"/>
        <dbReference type="ChEBI" id="CHEBI:79080"/>
        <dbReference type="EC" id="2.7.1.207"/>
    </reaction>
</comment>
<comment type="biophysicochemical properties">
    <kinetics>
        <KM evidence="9">0.4 uM for o-nitrophenyl-beta-D-galactopyranoside (ONPG)</KM>
        <Vmax evidence="9">30.0 nmol/min/mg enzyme with o-nitrophenyl-beta-D-galactopyranoside (ONPG) as substrate</Vmax>
    </kinetics>
</comment>
<comment type="subcellular location">
    <subcellularLocation>
        <location evidence="2 3 7 9">Cell membrane</location>
        <topology evidence="2 12 15">Multi-pass membrane protein</topology>
    </subcellularLocation>
</comment>
<comment type="induction">
    <text evidence="4 8">Induced by lactose, galactose and galactose-6-P. Repressed by glucose.</text>
</comment>
<comment type="domain">
    <text evidence="2">The EIIC type-3 domain forms the PTS system translocation channel and contains the specific substrate-binding site.</text>
</comment>
<comment type="domain">
    <text evidence="1">The PTS EIIB type-3 domain is phosphorylated by phospho-EIIA on a cysteinyl residue. Then, it transfers the phosphoryl group to the sugar substrate concomitantly with the sugar uptake processed by the PTS EIIC type-3 domain.</text>
</comment>
<comment type="sequence caution" evidence="11">
    <conflict type="erroneous initiation">
        <sequence resource="EMBL-CDS" id="AAA26649"/>
    </conflict>
    <text>Extended N-terminus.</text>
</comment>
<accession>P11162</accession>
<reference key="1">
    <citation type="journal article" date="1987" name="J. Biol. Chem.">
        <title>Identification of the genes for the lactose-specific components of the phosphotransferase system in the lac operon of Staphylococcus aureus.</title>
        <authorList>
            <person name="Breidt F. Jr."/>
            <person name="Hengstenberg W."/>
            <person name="Finkeldei U."/>
            <person name="Stewart G.C."/>
        </authorList>
    </citation>
    <scope>NUCLEOTIDE SEQUENCE [GENOMIC DNA]</scope>
    <scope>FUNCTION</scope>
    <scope>SUBCELLULAR LOCATION</scope>
</reference>
<reference key="2">
    <citation type="journal article" date="1995" name="Eur. J. Biochem.">
        <title>Lactose-specific enzyme II of the phosphoenolpyruvate-dependent phosphotransferase system of Staphylococcus aureus. Purification of the histidine-tagged transmembrane component IICBLac and its hydrophilic IIB domain by metal-affinity chromatography, and functional characterization.</title>
        <authorList>
            <person name="Peters D."/>
            <person name="Frank R."/>
            <person name="Hengstenberg W."/>
        </authorList>
    </citation>
    <scope>PROTEIN SEQUENCE OF 1-10</scope>
    <scope>FUNCTION</scope>
    <scope>CATALYTIC ACTIVITY</scope>
    <scope>BIOPHYSICOCHEMICAL PROPERTIES</scope>
    <scope>MUTAGENESIS OF CYS-474</scope>
    <scope>PHOSPHORYLATION AT CYS-474</scope>
    <scope>ACTIVE SITE</scope>
    <scope>SUBCELLULAR LOCATION</scope>
</reference>
<reference key="3">
    <citation type="journal article" date="1963" name="J. Bacteriol.">
        <title>Induction of lactose utilization in Staphylococcus aureus.</title>
        <authorList>
            <person name="McClatchy J.K."/>
            <person name="Rosenblum E.D."/>
        </authorList>
    </citation>
    <scope>INDUCTION</scope>
</reference>
<reference key="4">
    <citation type="journal article" date="1968" name="Biochem. Biophys. Res. Commun.">
        <title>Resolution of a staphylococcal phosphotransferase system into four protein components and its relation to sugar transport.</title>
        <authorList>
            <person name="Simoni R.D."/>
            <person name="Smith M.F."/>
            <person name="Roseman S."/>
        </authorList>
    </citation>
    <scope>INDUCTION</scope>
</reference>
<reference key="5">
    <citation type="journal article" date="1970" name="FEBS Lett.">
        <title>Solubilization of the membrane bound lactose specific component of the staphylococcal PEP dependant phosphotransferase system.</title>
        <authorList>
            <person name="Hengstenberg W."/>
        </authorList>
    </citation>
    <scope>SUBCELLULAR LOCATION</scope>
</reference>
<reference key="6">
    <citation type="journal article" date="1971" name="Eur. J. Biochem.">
        <title>Purification and characterization of the inducible lactose-specific membrane-bound component of the staphylococcal phosphenolpyruvate-dependent phosphotransferase system.</title>
        <authorList>
            <person name="Korte T."/>
            <person name="Hengstenberg W."/>
        </authorList>
    </citation>
    <scope>FUNCTION</scope>
    <scope>SUBCELLULAR LOCATION</scope>
</reference>
<reference key="7">
    <citation type="journal article" date="1973" name="J. Biol. Chem.">
        <title>Sugar transport. IV. Isolation and characterization of the lactose phosphotransferase system in Staphylococcus aureus.</title>
        <authorList>
            <person name="Simoni R.D."/>
            <person name="Nakazawa T."/>
            <person name="Hays J.B."/>
            <person name="Roseman S."/>
        </authorList>
    </citation>
    <scope>FUNCTION</scope>
    <scope>CATALYTIC ACTIVITY</scope>
    <scope>SUBSTRATE SPECIFICITY</scope>
</reference>
<reference key="8">
    <citation type="journal article" date="1973" name="J. Biol. Chem.">
        <title>Sugar transport. VI. Phosphoryl transfer in the lactose phosphotransferase system of Staphylococcus aureus.</title>
        <authorList>
            <person name="Simoni R.D."/>
            <person name="Hays J.B."/>
            <person name="Nakazawa T."/>
            <person name="Roseman S."/>
        </authorList>
    </citation>
    <scope>FUNCTION</scope>
    <scope>CATALYTIC ACTIVITY</scope>
    <scope>REACTION MECHANISM</scope>
</reference>
<reference key="9">
    <citation type="journal article" date="1981" name="Eur. J. Biochem.">
        <title>The staphylococcal phosphoenolpyruvate-dependent phosphotransferase system. Purification and characterisation of the galactoside-specific membrane-component enzyme II.</title>
        <authorList>
            <person name="Schaefer A."/>
            <person name="Schrecker O."/>
            <person name="Hengstenberg W."/>
        </authorList>
    </citation>
    <scope>SUBCELLULAR LOCATION</scope>
</reference>
<name>PTLCB_STAAU</name>
<evidence type="ECO:0000255" key="1">
    <source>
        <dbReference type="PROSITE-ProRule" id="PRU00423"/>
    </source>
</evidence>
<evidence type="ECO:0000255" key="2">
    <source>
        <dbReference type="PROSITE-ProRule" id="PRU00428"/>
    </source>
</evidence>
<evidence type="ECO:0000269" key="3">
    <source>
    </source>
</evidence>
<evidence type="ECO:0000269" key="4">
    <source>
    </source>
</evidence>
<evidence type="ECO:0000269" key="5">
    <source>
    </source>
</evidence>
<evidence type="ECO:0000269" key="6">
    <source>
    </source>
</evidence>
<evidence type="ECO:0000269" key="7">
    <source>
    </source>
</evidence>
<evidence type="ECO:0000269" key="8">
    <source>
    </source>
</evidence>
<evidence type="ECO:0000269" key="9">
    <source>
    </source>
</evidence>
<evidence type="ECO:0000303" key="10">
    <source>
    </source>
</evidence>
<evidence type="ECO:0000305" key="11"/>
<evidence type="ECO:0000305" key="12">
    <source>
    </source>
</evidence>
<evidence type="ECO:0000305" key="13">
    <source>
    </source>
</evidence>
<evidence type="ECO:0000305" key="14">
    <source>
    </source>
</evidence>
<evidence type="ECO:0000305" key="15">
    <source>
    </source>
</evidence>
<evidence type="ECO:0000305" key="16">
    <source>
    </source>
</evidence>
<sequence length="570" mass="62447">MMQKLIAQIEKGKPFFEKLSRNIYLRAIRDGFISAMPVILFSSIFLLIAYVPNIFGFKWDKGMEAILMKPYNYTMGLVAFLVAGTTAKSLTDSFNRKLESTNQINFISTMQAAMCGFLFLASDPAKDGGFLSAFMGTKGLLTAFLSAFVTVIVYNFCVKRNITIKMPKEVPPNISQVFKDLIPFSAVIIILYALDLVIRNSFKSNVAEGILKLFEPLFTAADGWIGVTIIFGAFALFWFVGIHGPSIVEPAIAAITYANIEANFKLLQAGEHADKIITSGTQMFIVTFGGTGATLVVPFMFMWMTKSKRNKAIGRASVVPTFFGVNEPILFGAPLVLNPVFFIPFVLAPIVNVWIFKLFVEVLGMNSFSVNLPWTTPGPLGIIMGTGFGLWSFVLAITLIVVDIIIYYPFLKVYDSEILDEEEGRKESNSDLKEKVAANFDTKKADSILAASGVSDDAAKASNITEQTNVLVLCAGGGTSGLLANALNKAAEEYHVPVKAAAGGYGAHMDIMKEYQLIILAPQVASNYEDIKQDTDRLGIKLAKTQGAEYIKLTRDGQAALDFVQQQFEN</sequence>
<protein>
    <recommendedName>
        <fullName evidence="10">PTS system lactose-specific EIICB component</fullName>
    </recommendedName>
    <alternativeName>
        <fullName evidence="10">EIICB-Lac</fullName>
        <shortName evidence="10">EII-Lac</shortName>
    </alternativeName>
    <domain>
        <recommendedName>
            <fullName evidence="10">PTS system lactose-specific EIIC component</fullName>
        </recommendedName>
        <alternativeName>
            <fullName evidence="10">Lactose permease IIC component</fullName>
        </alternativeName>
    </domain>
    <domain>
        <recommendedName>
            <fullName evidence="10">PTS system lactose-specific EIIB component</fullName>
            <ecNumber evidence="6 9 13">2.7.1.207</ecNumber>
        </recommendedName>
        <alternativeName>
            <fullName evidence="10">Lactose-specific phosphotransferase enzyme IIB component</fullName>
        </alternativeName>
    </domain>
</protein>
<proteinExistence type="evidence at protein level"/>
<feature type="chain" id="PRO_0000186591" description="PTS system lactose-specific EIICB component">
    <location>
        <begin position="1"/>
        <end position="570"/>
    </location>
</feature>
<feature type="transmembrane region" description="Helical" evidence="2">
    <location>
        <begin position="31"/>
        <end position="51"/>
    </location>
</feature>
<feature type="transmembrane region" description="Helical" evidence="2">
    <location>
        <begin position="65"/>
        <end position="85"/>
    </location>
</feature>
<feature type="transmembrane region" description="Helical" evidence="2">
    <location>
        <begin position="104"/>
        <end position="124"/>
    </location>
</feature>
<feature type="transmembrane region" description="Helical" evidence="2">
    <location>
        <begin position="133"/>
        <end position="153"/>
    </location>
</feature>
<feature type="transmembrane region" description="Helical" evidence="2">
    <location>
        <begin position="178"/>
        <end position="198"/>
    </location>
</feature>
<feature type="transmembrane region" description="Helical" evidence="2">
    <location>
        <begin position="223"/>
        <end position="243"/>
    </location>
</feature>
<feature type="transmembrane region" description="Helical" evidence="2">
    <location>
        <begin position="283"/>
        <end position="303"/>
    </location>
</feature>
<feature type="transmembrane region" description="Helical" evidence="2">
    <location>
        <begin position="340"/>
        <end position="360"/>
    </location>
</feature>
<feature type="transmembrane region" description="Helical" evidence="2">
    <location>
        <begin position="382"/>
        <end position="402"/>
    </location>
</feature>
<feature type="domain" description="PTS EIIC type-3" evidence="2">
    <location>
        <begin position="9"/>
        <end position="410"/>
    </location>
</feature>
<feature type="domain" description="PTS EIIB type-3" evidence="1">
    <location>
        <begin position="467"/>
        <end position="570"/>
    </location>
</feature>
<feature type="active site" description="Phosphocysteine intermediate; for EIIB activity" evidence="16">
    <location>
        <position position="474"/>
    </location>
</feature>
<feature type="modified residue" description="Phosphocysteine; by EIIA" evidence="1 9">
    <location>
        <position position="474"/>
    </location>
</feature>
<feature type="mutagenesis site" description="Unable to be phosphorylated." evidence="9">
    <original>C</original>
    <variation>S</variation>
    <location>
        <position position="474"/>
    </location>
</feature>
<organism>
    <name type="scientific">Staphylococcus aureus</name>
    <dbReference type="NCBI Taxonomy" id="1280"/>
    <lineage>
        <taxon>Bacteria</taxon>
        <taxon>Bacillati</taxon>
        <taxon>Bacillota</taxon>
        <taxon>Bacilli</taxon>
        <taxon>Bacillales</taxon>
        <taxon>Staphylococcaceae</taxon>
        <taxon>Staphylococcus</taxon>
    </lineage>
</organism>
<gene>
    <name evidence="10" type="primary">lacE</name>
</gene>
<dbReference type="EC" id="2.7.1.207" evidence="6 9 13"/>
<dbReference type="EMBL" id="J03479">
    <property type="protein sequence ID" value="AAA26649.1"/>
    <property type="status" value="ALT_INIT"/>
    <property type="molecule type" value="Genomic_DNA"/>
</dbReference>
<dbReference type="PIR" id="B28474">
    <property type="entry name" value="B28474"/>
</dbReference>
<dbReference type="SMR" id="P11162"/>
<dbReference type="TCDB" id="4.A.3.1.1">
    <property type="family name" value="the pts lactose-n,n'-diacetylchitobiose-Beta-glucoside (lac) family"/>
</dbReference>
<dbReference type="iPTMnet" id="P11162"/>
<dbReference type="SABIO-RK" id="P11162"/>
<dbReference type="GO" id="GO:0005886">
    <property type="term" value="C:plasma membrane"/>
    <property type="evidence" value="ECO:0007669"/>
    <property type="project" value="UniProtKB-SubCell"/>
</dbReference>
<dbReference type="GO" id="GO:0016301">
    <property type="term" value="F:kinase activity"/>
    <property type="evidence" value="ECO:0007669"/>
    <property type="project" value="UniProtKB-KW"/>
</dbReference>
<dbReference type="GO" id="GO:0022869">
    <property type="term" value="F:protein-N(PI)-phosphohistidine-lactose phosphotransferase system transporter activity"/>
    <property type="evidence" value="ECO:0007669"/>
    <property type="project" value="InterPro"/>
</dbReference>
<dbReference type="GO" id="GO:1901264">
    <property type="term" value="P:carbohydrate derivative transport"/>
    <property type="evidence" value="ECO:0007669"/>
    <property type="project" value="TreeGrafter"/>
</dbReference>
<dbReference type="GO" id="GO:0009401">
    <property type="term" value="P:phosphoenolpyruvate-dependent sugar phosphotransferase system"/>
    <property type="evidence" value="ECO:0007669"/>
    <property type="project" value="UniProtKB-KW"/>
</dbReference>
<dbReference type="CDD" id="cd05565">
    <property type="entry name" value="PTS_IIB_lactose"/>
    <property type="match status" value="1"/>
</dbReference>
<dbReference type="Gene3D" id="3.40.50.2300">
    <property type="match status" value="1"/>
</dbReference>
<dbReference type="InterPro" id="IPR004801">
    <property type="entry name" value="LacE"/>
</dbReference>
<dbReference type="InterPro" id="IPR036095">
    <property type="entry name" value="PTS_EIIB-like_sf"/>
</dbReference>
<dbReference type="InterPro" id="IPR003501">
    <property type="entry name" value="PTS_EIIB_2/3"/>
</dbReference>
<dbReference type="InterPro" id="IPR013012">
    <property type="entry name" value="PTS_EIIB_3"/>
</dbReference>
<dbReference type="InterPro" id="IPR003352">
    <property type="entry name" value="PTS_EIIC"/>
</dbReference>
<dbReference type="InterPro" id="IPR004501">
    <property type="entry name" value="PTS_EIIC_3"/>
</dbReference>
<dbReference type="InterPro" id="IPR041713">
    <property type="entry name" value="PTS_IIB"/>
</dbReference>
<dbReference type="InterPro" id="IPR051088">
    <property type="entry name" value="PTS_Sugar-EIIC/EIIB"/>
</dbReference>
<dbReference type="NCBIfam" id="TIGR00394">
    <property type="entry name" value="lac_pts_IIC"/>
    <property type="match status" value="1"/>
</dbReference>
<dbReference type="NCBIfam" id="TIGR00410">
    <property type="entry name" value="lacE"/>
    <property type="match status" value="1"/>
</dbReference>
<dbReference type="NCBIfam" id="TIGR00853">
    <property type="entry name" value="pts-lac"/>
    <property type="match status" value="1"/>
</dbReference>
<dbReference type="PANTHER" id="PTHR33989">
    <property type="match status" value="1"/>
</dbReference>
<dbReference type="PANTHER" id="PTHR33989:SF8">
    <property type="entry name" value="PERMEASE IIC COMPONENT"/>
    <property type="match status" value="1"/>
</dbReference>
<dbReference type="Pfam" id="PF02378">
    <property type="entry name" value="PTS_EIIC"/>
    <property type="match status" value="1"/>
</dbReference>
<dbReference type="Pfam" id="PF02302">
    <property type="entry name" value="PTS_IIB"/>
    <property type="match status" value="1"/>
</dbReference>
<dbReference type="SUPFAM" id="SSF52794">
    <property type="entry name" value="PTS system IIB component-like"/>
    <property type="match status" value="1"/>
</dbReference>
<dbReference type="PROSITE" id="PS51100">
    <property type="entry name" value="PTS_EIIB_TYPE_3"/>
    <property type="match status" value="1"/>
</dbReference>
<dbReference type="PROSITE" id="PS51105">
    <property type="entry name" value="PTS_EIIC_TYPE_3"/>
    <property type="match status" value="1"/>
</dbReference>